<proteinExistence type="inferred from homology"/>
<comment type="function">
    <text evidence="1">Escorts unspliced or incompletely spliced viral pre-mRNAs (late transcripts) out of the nucleus of infected cells. These pre-mRNAs carry a recognition sequence called Rev responsive element (RRE) located in the env gene, that is not present in fully spliced viral mRNAs (early transcripts). This function is essential since most viral proteins are translated from unspliced or partially spliced pre-mRNAs which cannot exit the nucleus by the pathway used by fully processed cellular mRNAs. Rev itself is translated from a fully spliced mRNA that readily exits the nucleus. Rev's nuclear localization signal (NLS) binds directly to KPNB1/Importin beta-1 without previous binding to KPNA1/Importin alpha-1. KPNB1 binds to the GDP bound form of RAN (Ran-GDP) and targets Rev to the nucleus. In the nucleus, the conversion from Ran-GDP to Ran-GTP dissociates Rev from KPNB1 and allows Rev's binding to the RRE in viral pre-mRNAs. Rev multimerization on the RRE via cooperative assembly exposes its nuclear export signal (NES) to the surface. Rev can then form a complex with XPO1/CRM1 and Ran-GTP, leading to nuclear export of the complex. Conversion from Ran-GTP to Ran-GDP mediates dissociation of the Rev/RRE/XPO1/RAN complex, so that Rev can return to the nucleus for a subsequent round of export. Beside KPNB1, also seems to interact with TNPO1/Transportin-1, RANBP5/IPO5 and IPO7/RANBP7 for nuclear import. The nucleoporin-like HRB/RIP is an essential cofactor that probably indirectly interacts with Rev to release HIV RNAs from the perinuclear region to the cytoplasm.</text>
</comment>
<comment type="subunit">
    <text evidence="1">Homomultimer; when bound to the RRE. Multimeric assembly is essential for activity and may involve XPO1. Binds to human KPNB1, XPO1, TNPO1, RANBP5 and IPO7. Interacts with the viral Integrase. Interacts with human KHDRBS1. Interacts with human NAP1; this interaction decreases Rev multimerization and stimulates its activity. Interacts with human DEAD-box helicases DDX3 and DDX24; these interactions may serve for viral RNA export to the cytoplasm and packaging, respectively. Interacts with human PSIP1; this interaction may inhibit HIV-1 DNA integration by promoting dissociation of the Integrase-LEDGF/p75 complex.</text>
</comment>
<comment type="subcellular location">
    <subcellularLocation>
        <location evidence="1">Host nucleus</location>
        <location evidence="1">Host nucleolus</location>
    </subcellularLocation>
    <subcellularLocation>
        <location evidence="1">Host cytoplasm</location>
    </subcellularLocation>
    <text evidence="1">The presence of both nuclear import and nuclear export signals leads to continuous shuttling between the nucleus and cytoplasm.</text>
</comment>
<comment type="domain">
    <text evidence="1">The RNA-binding motif binds to the RRE, a 240 bp stem-and-loop structure present in incompletely spliced viral pre-mRNAs. This region also contains the NLS which mediates nuclear localization via KPNB1 binding and, when the N-terminal sequence is present, nucleolar targeting. These overlapping functions prevent Rev bound to RRE from undesirable return to the nucleus. When Rev binds the RRE, the NLS becomes masked while the NES remains accessible. The leucine-rich NES mediates binding to human XPO1.</text>
</comment>
<comment type="PTM">
    <text evidence="1">Asymmetrically arginine dimethylated at one site by host PRMT6. Methylation impairs the RNA-binding activity and export of viral RNA from the nucleus to the cytoplasm.</text>
</comment>
<comment type="PTM">
    <text evidence="1">Phosphorylated by protein kinase CK2. Presence of, and maybe binding to the N-terminus of the regulatory beta subunit of CK2 is necessary for CK2-mediated Rev's phosphorylation.</text>
</comment>
<comment type="miscellaneous">
    <text evidence="1">HIV-1 lineages are divided in three main groups, M (for Major), O (for Outlier), and N (for New, or Non-M, Non-O). The vast majority of strains found worldwide belong to the group M. Group O seems to be endemic to and largely confined to Cameroon and neighboring countries in West Central Africa, where these viruses represent a small minority of HIV-1 strains. The group N is represented by a limited number of isolates from Cameroonian persons. The group M is further subdivided in 9 clades or subtypes (A to D, F to H, J and K).</text>
</comment>
<comment type="similarity">
    <text evidence="1">Belongs to the HIV-1 REV protein family.</text>
</comment>
<organismHost>
    <name type="scientific">Homo sapiens</name>
    <name type="common">Human</name>
    <dbReference type="NCBI Taxonomy" id="9606"/>
</organismHost>
<accession>P04623</accession>
<feature type="chain" id="PRO_0000085259" description="Protein Rev">
    <location>
        <begin position="1"/>
        <end position="116"/>
    </location>
</feature>
<feature type="region of interest" description="Homomultimerization" evidence="1">
    <location>
        <begin position="18"/>
        <end position="26"/>
    </location>
</feature>
<feature type="region of interest" description="Disordered" evidence="2">
    <location>
        <begin position="23"/>
        <end position="48"/>
    </location>
</feature>
<feature type="region of interest" description="Disordered" evidence="2">
    <location>
        <begin position="90"/>
        <end position="116"/>
    </location>
</feature>
<feature type="short sequence motif" description="Nuclear localization signal and RNA-binding (RRE)" evidence="1">
    <location>
        <begin position="34"/>
        <end position="50"/>
    </location>
</feature>
<feature type="short sequence motif" description="Nuclear export signal and binding to XPO1" evidence="1">
    <location>
        <begin position="73"/>
        <end position="84"/>
    </location>
</feature>
<feature type="compositionally biased region" description="Basic residues" evidence="2">
    <location>
        <begin position="36"/>
        <end position="47"/>
    </location>
</feature>
<feature type="modified residue" description="Phosphoserine; by host CK2" evidence="1">
    <location>
        <position position="5"/>
    </location>
</feature>
<feature type="modified residue" description="Phosphoserine; by host CK2" evidence="1">
    <location>
        <position position="8"/>
    </location>
</feature>
<feature type="modified residue" description="Phosphoserine; by host" evidence="1">
    <location>
        <position position="92"/>
    </location>
</feature>
<feature type="modified residue" description="Phosphoserine; by host" evidence="1">
    <location>
        <position position="99"/>
    </location>
</feature>
<keyword id="KW-0014">AIDS</keyword>
<keyword id="KW-1035">Host cytoplasm</keyword>
<keyword id="KW-1048">Host nucleus</keyword>
<keyword id="KW-0945">Host-virus interaction</keyword>
<keyword id="KW-0488">Methylation</keyword>
<keyword id="KW-0509">mRNA transport</keyword>
<keyword id="KW-0597">Phosphoprotein</keyword>
<keyword id="KW-1185">Reference proteome</keyword>
<keyword id="KW-0694">RNA-binding</keyword>
<keyword id="KW-0813">Transport</keyword>
<organism>
    <name type="scientific">Human immunodeficiency virus type 1 group M subtype B (isolate ARV2/SF2)</name>
    <name type="common">HIV-1</name>
    <dbReference type="NCBI Taxonomy" id="11685"/>
    <lineage>
        <taxon>Viruses</taxon>
        <taxon>Riboviria</taxon>
        <taxon>Pararnavirae</taxon>
        <taxon>Artverviricota</taxon>
        <taxon>Revtraviricetes</taxon>
        <taxon>Ortervirales</taxon>
        <taxon>Retroviridae</taxon>
        <taxon>Orthoretrovirinae</taxon>
        <taxon>Lentivirus</taxon>
        <taxon>Human immunodeficiency virus type 1</taxon>
    </lineage>
</organism>
<protein>
    <recommendedName>
        <fullName evidence="1">Protein Rev</fullName>
    </recommendedName>
    <alternativeName>
        <fullName evidence="1">ART/TRS</fullName>
    </alternativeName>
    <alternativeName>
        <fullName evidence="1">Anti-repression transactivator</fullName>
    </alternativeName>
    <alternativeName>
        <fullName evidence="1">Regulator of expression of viral proteins</fullName>
    </alternativeName>
</protein>
<dbReference type="EMBL" id="K02007">
    <property type="protein sequence ID" value="AAB59880.1"/>
    <property type="molecule type" value="Genomic_RNA"/>
</dbReference>
<dbReference type="Proteomes" id="UP000007688">
    <property type="component" value="Genome"/>
</dbReference>
<dbReference type="GO" id="GO:0030430">
    <property type="term" value="C:host cell cytoplasm"/>
    <property type="evidence" value="ECO:0007669"/>
    <property type="project" value="UniProtKB-SubCell"/>
</dbReference>
<dbReference type="GO" id="GO:0044196">
    <property type="term" value="C:host cell nucleolus"/>
    <property type="evidence" value="ECO:0007669"/>
    <property type="project" value="UniProtKB-SubCell"/>
</dbReference>
<dbReference type="GO" id="GO:0003700">
    <property type="term" value="F:DNA-binding transcription factor activity"/>
    <property type="evidence" value="ECO:0007669"/>
    <property type="project" value="UniProtKB-UniRule"/>
</dbReference>
<dbReference type="GO" id="GO:0003723">
    <property type="term" value="F:RNA binding"/>
    <property type="evidence" value="ECO:0007669"/>
    <property type="project" value="UniProtKB-UniRule"/>
</dbReference>
<dbReference type="GO" id="GO:0051028">
    <property type="term" value="P:mRNA transport"/>
    <property type="evidence" value="ECO:0007669"/>
    <property type="project" value="UniProtKB-UniRule"/>
</dbReference>
<dbReference type="GO" id="GO:0016032">
    <property type="term" value="P:viral process"/>
    <property type="evidence" value="ECO:0007669"/>
    <property type="project" value="UniProtKB-UniRule"/>
</dbReference>
<dbReference type="Gene3D" id="6.10.140.630">
    <property type="match status" value="1"/>
</dbReference>
<dbReference type="HAMAP" id="MF_04077">
    <property type="entry name" value="REV_HIV1"/>
    <property type="match status" value="1"/>
</dbReference>
<dbReference type="InterPro" id="IPR000625">
    <property type="entry name" value="REV_protein"/>
</dbReference>
<dbReference type="Pfam" id="PF00424">
    <property type="entry name" value="REV"/>
    <property type="match status" value="1"/>
</dbReference>
<gene>
    <name evidence="1" type="primary">rev</name>
</gene>
<sequence length="116" mass="12967">MAGRSGDSDEELLRTVRLIKLLYQSNPPPSPEGTRQARRNRRRRWRERQRQIRSISGWILSTYLGRSAEPVPLQLPPLERLTLDCSEDCGNSGAQGVGSPQILVESPAVLDSGTKE</sequence>
<evidence type="ECO:0000255" key="1">
    <source>
        <dbReference type="HAMAP-Rule" id="MF_04077"/>
    </source>
</evidence>
<evidence type="ECO:0000256" key="2">
    <source>
        <dbReference type="SAM" id="MobiDB-lite"/>
    </source>
</evidence>
<name>REV_HV1A2</name>
<reference key="1">
    <citation type="journal article" date="1985" name="Science">
        <title>Nucleotide sequence and expression of an AIDS-associated retrovirus (ARV-2).</title>
        <authorList>
            <person name="Sanchez-Pescador R."/>
            <person name="Power M.D."/>
            <person name="Barr P.J."/>
            <person name="Steimer K.S."/>
            <person name="Stempien M.M."/>
            <person name="Brown-Shimer S.L."/>
            <person name="Gee W.W."/>
            <person name="Renard A."/>
            <person name="Randolph A."/>
            <person name="Levy J.A."/>
            <person name="Dina D."/>
            <person name="Luciw P.A."/>
        </authorList>
    </citation>
    <scope>NUCLEOTIDE SEQUENCE [GENOMIC RNA]</scope>
</reference>
<reference key="2">
    <citation type="journal article" date="1999" name="Arch. Biochem. Biophys.">
        <title>The ins and outs of HIV Rev.</title>
        <authorList>
            <person name="Hope T.J."/>
        </authorList>
    </citation>
    <scope>REVIEW</scope>
</reference>